<name>ARLY_AZOSB</name>
<evidence type="ECO:0000255" key="1">
    <source>
        <dbReference type="HAMAP-Rule" id="MF_00006"/>
    </source>
</evidence>
<evidence type="ECO:0000256" key="2">
    <source>
        <dbReference type="SAM" id="MobiDB-lite"/>
    </source>
</evidence>
<protein>
    <recommendedName>
        <fullName evidence="1">Argininosuccinate lyase</fullName>
        <shortName evidence="1">ASAL</shortName>
        <ecNumber evidence="1">4.3.2.1</ecNumber>
    </recommendedName>
    <alternativeName>
        <fullName evidence="1">Arginosuccinase</fullName>
    </alternativeName>
</protein>
<accession>A1K451</accession>
<organism>
    <name type="scientific">Azoarcus sp. (strain BH72)</name>
    <dbReference type="NCBI Taxonomy" id="418699"/>
    <lineage>
        <taxon>Bacteria</taxon>
        <taxon>Pseudomonadati</taxon>
        <taxon>Pseudomonadota</taxon>
        <taxon>Betaproteobacteria</taxon>
        <taxon>Rhodocyclales</taxon>
        <taxon>Zoogloeaceae</taxon>
        <taxon>Azoarcus</taxon>
    </lineage>
</organism>
<proteinExistence type="inferred from homology"/>
<comment type="catalytic activity">
    <reaction evidence="1">
        <text>2-(N(omega)-L-arginino)succinate = fumarate + L-arginine</text>
        <dbReference type="Rhea" id="RHEA:24020"/>
        <dbReference type="ChEBI" id="CHEBI:29806"/>
        <dbReference type="ChEBI" id="CHEBI:32682"/>
        <dbReference type="ChEBI" id="CHEBI:57472"/>
        <dbReference type="EC" id="4.3.2.1"/>
    </reaction>
</comment>
<comment type="pathway">
    <text evidence="1">Amino-acid biosynthesis; L-arginine biosynthesis; L-arginine from L-ornithine and carbamoyl phosphate: step 3/3.</text>
</comment>
<comment type="subcellular location">
    <subcellularLocation>
        <location evidence="1">Cytoplasm</location>
    </subcellularLocation>
</comment>
<comment type="similarity">
    <text evidence="1">Belongs to the lyase 1 family. Argininosuccinate lyase subfamily.</text>
</comment>
<sequence length="480" mass="52723">MTDTTPSADLGASSQQPAKAWSGRFSEPVSDLVKRYTASVFFDNRMAEQDIRGSLAHAKMLARQGIIGAQDLADIERGMAQIKGEIERGEFNWNLDDEDVHLNIEKRLTALVGDAGKRLHTGRSRNDQVATDIRLWLRDAIDQILALIGDFQKNLLDVAEANAATPMPGFTHLQVAQPVTFGHHLMAYFEMTRRDAERFADCRKRVNRLPLGSAALAGTSYPIDREFVARELGFDEVCYNSLDAVSDRDFAIEFCAASSLLMTHLSRFSEELILWMSPRFGFIDLADRFCTGSSIMPQKKNPDVPELVRGKTGRVNGSLIALLTLMKGQPLAYNKDNQEDKEPLFDTADTVIDTLRIYADMITGIRVKADNMRGALTQGYATATDLADYLVKKGLPFRDAHEAVALAVRAAEVRGCDLPQFSLDELRAAMAHVPGAADKLADDIFGVLTVEGSLDSRNHIGGTAPAQVLAAVAHARTRLG</sequence>
<feature type="chain" id="PRO_0000321429" description="Argininosuccinate lyase">
    <location>
        <begin position="1"/>
        <end position="480"/>
    </location>
</feature>
<feature type="region of interest" description="Disordered" evidence="2">
    <location>
        <begin position="1"/>
        <end position="24"/>
    </location>
</feature>
<feature type="compositionally biased region" description="Polar residues" evidence="2">
    <location>
        <begin position="1"/>
        <end position="17"/>
    </location>
</feature>
<reference key="1">
    <citation type="journal article" date="2006" name="Nat. Biotechnol.">
        <title>Complete genome of the mutualistic, N2-fixing grass endophyte Azoarcus sp. strain BH72.</title>
        <authorList>
            <person name="Krause A."/>
            <person name="Ramakumar A."/>
            <person name="Bartels D."/>
            <person name="Battistoni F."/>
            <person name="Bekel T."/>
            <person name="Boch J."/>
            <person name="Boehm M."/>
            <person name="Friedrich F."/>
            <person name="Hurek T."/>
            <person name="Krause L."/>
            <person name="Linke B."/>
            <person name="McHardy A.C."/>
            <person name="Sarkar A."/>
            <person name="Schneiker S."/>
            <person name="Syed A.A."/>
            <person name="Thauer R."/>
            <person name="Vorhoelter F.-J."/>
            <person name="Weidner S."/>
            <person name="Puehler A."/>
            <person name="Reinhold-Hurek B."/>
            <person name="Kaiser O."/>
            <person name="Goesmann A."/>
        </authorList>
    </citation>
    <scope>NUCLEOTIDE SEQUENCE [LARGE SCALE GENOMIC DNA]</scope>
    <source>
        <strain>BH72</strain>
    </source>
</reference>
<gene>
    <name evidence="1" type="primary">argH</name>
    <name type="ordered locus">azo0989</name>
</gene>
<dbReference type="EC" id="4.3.2.1" evidence="1"/>
<dbReference type="EMBL" id="AM406670">
    <property type="protein sequence ID" value="CAL93606.1"/>
    <property type="molecule type" value="Genomic_DNA"/>
</dbReference>
<dbReference type="RefSeq" id="WP_011764723.1">
    <property type="nucleotide sequence ID" value="NC_008702.1"/>
</dbReference>
<dbReference type="SMR" id="A1K451"/>
<dbReference type="STRING" id="62928.azo0989"/>
<dbReference type="KEGG" id="azo:azo0989"/>
<dbReference type="eggNOG" id="COG0165">
    <property type="taxonomic scope" value="Bacteria"/>
</dbReference>
<dbReference type="HOGENOM" id="CLU_027272_2_3_4"/>
<dbReference type="UniPathway" id="UPA00068">
    <property type="reaction ID" value="UER00114"/>
</dbReference>
<dbReference type="Proteomes" id="UP000002588">
    <property type="component" value="Chromosome"/>
</dbReference>
<dbReference type="GO" id="GO:0005829">
    <property type="term" value="C:cytosol"/>
    <property type="evidence" value="ECO:0007669"/>
    <property type="project" value="TreeGrafter"/>
</dbReference>
<dbReference type="GO" id="GO:0004056">
    <property type="term" value="F:argininosuccinate lyase activity"/>
    <property type="evidence" value="ECO:0007669"/>
    <property type="project" value="UniProtKB-UniRule"/>
</dbReference>
<dbReference type="GO" id="GO:0042450">
    <property type="term" value="P:arginine biosynthetic process via ornithine"/>
    <property type="evidence" value="ECO:0007669"/>
    <property type="project" value="InterPro"/>
</dbReference>
<dbReference type="GO" id="GO:0006526">
    <property type="term" value="P:L-arginine biosynthetic process"/>
    <property type="evidence" value="ECO:0007669"/>
    <property type="project" value="UniProtKB-UniRule"/>
</dbReference>
<dbReference type="CDD" id="cd01359">
    <property type="entry name" value="Argininosuccinate_lyase"/>
    <property type="match status" value="1"/>
</dbReference>
<dbReference type="FunFam" id="1.10.275.10:FF:000002">
    <property type="entry name" value="Argininosuccinate lyase"/>
    <property type="match status" value="1"/>
</dbReference>
<dbReference type="FunFam" id="1.10.40.30:FF:000001">
    <property type="entry name" value="Argininosuccinate lyase"/>
    <property type="match status" value="1"/>
</dbReference>
<dbReference type="FunFam" id="1.20.200.10:FF:000015">
    <property type="entry name" value="argininosuccinate lyase isoform X2"/>
    <property type="match status" value="1"/>
</dbReference>
<dbReference type="Gene3D" id="1.10.40.30">
    <property type="entry name" value="Fumarase/aspartase (C-terminal domain)"/>
    <property type="match status" value="1"/>
</dbReference>
<dbReference type="Gene3D" id="1.20.200.10">
    <property type="entry name" value="Fumarase/aspartase (Central domain)"/>
    <property type="match status" value="1"/>
</dbReference>
<dbReference type="Gene3D" id="1.10.275.10">
    <property type="entry name" value="Fumarase/aspartase (N-terminal domain)"/>
    <property type="match status" value="1"/>
</dbReference>
<dbReference type="HAMAP" id="MF_00006">
    <property type="entry name" value="Arg_succ_lyase"/>
    <property type="match status" value="1"/>
</dbReference>
<dbReference type="InterPro" id="IPR029419">
    <property type="entry name" value="Arg_succ_lyase_C"/>
</dbReference>
<dbReference type="InterPro" id="IPR009049">
    <property type="entry name" value="Argininosuccinate_lyase"/>
</dbReference>
<dbReference type="InterPro" id="IPR024083">
    <property type="entry name" value="Fumarase/histidase_N"/>
</dbReference>
<dbReference type="InterPro" id="IPR020557">
    <property type="entry name" value="Fumarate_lyase_CS"/>
</dbReference>
<dbReference type="InterPro" id="IPR000362">
    <property type="entry name" value="Fumarate_lyase_fam"/>
</dbReference>
<dbReference type="InterPro" id="IPR022761">
    <property type="entry name" value="Fumarate_lyase_N"/>
</dbReference>
<dbReference type="InterPro" id="IPR008948">
    <property type="entry name" value="L-Aspartase-like"/>
</dbReference>
<dbReference type="NCBIfam" id="TIGR00838">
    <property type="entry name" value="argH"/>
    <property type="match status" value="1"/>
</dbReference>
<dbReference type="PANTHER" id="PTHR43814">
    <property type="entry name" value="ARGININOSUCCINATE LYASE"/>
    <property type="match status" value="1"/>
</dbReference>
<dbReference type="PANTHER" id="PTHR43814:SF1">
    <property type="entry name" value="ARGININOSUCCINATE LYASE"/>
    <property type="match status" value="1"/>
</dbReference>
<dbReference type="Pfam" id="PF14698">
    <property type="entry name" value="ASL_C2"/>
    <property type="match status" value="1"/>
</dbReference>
<dbReference type="Pfam" id="PF00206">
    <property type="entry name" value="Lyase_1"/>
    <property type="match status" value="1"/>
</dbReference>
<dbReference type="PRINTS" id="PR00145">
    <property type="entry name" value="ARGSUCLYASE"/>
</dbReference>
<dbReference type="PRINTS" id="PR00149">
    <property type="entry name" value="FUMRATELYASE"/>
</dbReference>
<dbReference type="SUPFAM" id="SSF48557">
    <property type="entry name" value="L-aspartase-like"/>
    <property type="match status" value="1"/>
</dbReference>
<dbReference type="PROSITE" id="PS00163">
    <property type="entry name" value="FUMARATE_LYASES"/>
    <property type="match status" value="1"/>
</dbReference>
<keyword id="KW-0028">Amino-acid biosynthesis</keyword>
<keyword id="KW-0055">Arginine biosynthesis</keyword>
<keyword id="KW-0963">Cytoplasm</keyword>
<keyword id="KW-0456">Lyase</keyword>
<keyword id="KW-1185">Reference proteome</keyword>